<feature type="chain" id="PRO_1000045290" description="Probable transcriptional regulatory protein Ccur92_05350">
    <location>
        <begin position="1"/>
        <end position="235"/>
    </location>
</feature>
<organism>
    <name type="scientific">Campylobacter curvus (strain 525.92)</name>
    <dbReference type="NCBI Taxonomy" id="360105"/>
    <lineage>
        <taxon>Bacteria</taxon>
        <taxon>Pseudomonadati</taxon>
        <taxon>Campylobacterota</taxon>
        <taxon>Epsilonproteobacteria</taxon>
        <taxon>Campylobacterales</taxon>
        <taxon>Campylobacteraceae</taxon>
        <taxon>Campylobacter</taxon>
    </lineage>
</organism>
<accession>A7GX97</accession>
<evidence type="ECO:0000255" key="1">
    <source>
        <dbReference type="HAMAP-Rule" id="MF_00693"/>
    </source>
</evidence>
<dbReference type="EMBL" id="CP000767">
    <property type="protein sequence ID" value="EAT99445.1"/>
    <property type="molecule type" value="Genomic_DNA"/>
</dbReference>
<dbReference type="RefSeq" id="WP_011992018.1">
    <property type="nucleotide sequence ID" value="NC_009715.2"/>
</dbReference>
<dbReference type="SMR" id="A7GX97"/>
<dbReference type="STRING" id="360105.CCV52592_1037"/>
<dbReference type="KEGG" id="ccv:CCV52592_1037"/>
<dbReference type="HOGENOM" id="CLU_062974_2_2_7"/>
<dbReference type="OrthoDB" id="9781053at2"/>
<dbReference type="Proteomes" id="UP000006380">
    <property type="component" value="Chromosome"/>
</dbReference>
<dbReference type="GO" id="GO:0005829">
    <property type="term" value="C:cytosol"/>
    <property type="evidence" value="ECO:0007669"/>
    <property type="project" value="TreeGrafter"/>
</dbReference>
<dbReference type="GO" id="GO:0003677">
    <property type="term" value="F:DNA binding"/>
    <property type="evidence" value="ECO:0007669"/>
    <property type="project" value="UniProtKB-UniRule"/>
</dbReference>
<dbReference type="GO" id="GO:0006355">
    <property type="term" value="P:regulation of DNA-templated transcription"/>
    <property type="evidence" value="ECO:0007669"/>
    <property type="project" value="UniProtKB-UniRule"/>
</dbReference>
<dbReference type="FunFam" id="1.10.10.200:FF:000004">
    <property type="entry name" value="Probable transcriptional regulatory protein BSBG_02618"/>
    <property type="match status" value="1"/>
</dbReference>
<dbReference type="Gene3D" id="1.10.10.200">
    <property type="match status" value="1"/>
</dbReference>
<dbReference type="Gene3D" id="3.30.70.980">
    <property type="match status" value="2"/>
</dbReference>
<dbReference type="HAMAP" id="MF_00693">
    <property type="entry name" value="Transcrip_reg_TACO1"/>
    <property type="match status" value="1"/>
</dbReference>
<dbReference type="InterPro" id="IPR017856">
    <property type="entry name" value="Integrase-like_N"/>
</dbReference>
<dbReference type="InterPro" id="IPR048300">
    <property type="entry name" value="TACO1_YebC-like_2nd/3rd_dom"/>
</dbReference>
<dbReference type="InterPro" id="IPR049083">
    <property type="entry name" value="TACO1_YebC_N"/>
</dbReference>
<dbReference type="InterPro" id="IPR002876">
    <property type="entry name" value="Transcrip_reg_TACO1-like"/>
</dbReference>
<dbReference type="InterPro" id="IPR026564">
    <property type="entry name" value="Transcrip_reg_TACO1-like_dom3"/>
</dbReference>
<dbReference type="InterPro" id="IPR029072">
    <property type="entry name" value="YebC-like"/>
</dbReference>
<dbReference type="NCBIfam" id="NF009044">
    <property type="entry name" value="PRK12378.1"/>
    <property type="match status" value="1"/>
</dbReference>
<dbReference type="NCBIfam" id="TIGR01033">
    <property type="entry name" value="YebC/PmpR family DNA-binding transcriptional regulator"/>
    <property type="match status" value="1"/>
</dbReference>
<dbReference type="PANTHER" id="PTHR12532:SF6">
    <property type="entry name" value="TRANSCRIPTIONAL REGULATORY PROTEIN YEBC-RELATED"/>
    <property type="match status" value="1"/>
</dbReference>
<dbReference type="PANTHER" id="PTHR12532">
    <property type="entry name" value="TRANSLATIONAL ACTIVATOR OF CYTOCHROME C OXIDASE 1"/>
    <property type="match status" value="1"/>
</dbReference>
<dbReference type="Pfam" id="PF20772">
    <property type="entry name" value="TACO1_YebC_N"/>
    <property type="match status" value="1"/>
</dbReference>
<dbReference type="Pfam" id="PF01709">
    <property type="entry name" value="Transcrip_reg"/>
    <property type="match status" value="1"/>
</dbReference>
<dbReference type="SUPFAM" id="SSF75625">
    <property type="entry name" value="YebC-like"/>
    <property type="match status" value="1"/>
</dbReference>
<gene>
    <name type="ordered locus">Ccur92_05350</name>
    <name type="ORF">CCV52592_1037</name>
</gene>
<name>Y535_CAMC5</name>
<comment type="subcellular location">
    <subcellularLocation>
        <location evidence="1">Cytoplasm</location>
    </subcellularLocation>
</comment>
<comment type="similarity">
    <text evidence="1">Belongs to the TACO1 family.</text>
</comment>
<keyword id="KW-0963">Cytoplasm</keyword>
<keyword id="KW-0238">DNA-binding</keyword>
<keyword id="KW-1185">Reference proteome</keyword>
<keyword id="KW-0804">Transcription</keyword>
<keyword id="KW-0805">Transcription regulation</keyword>
<reference key="1">
    <citation type="submission" date="2007-07" db="EMBL/GenBank/DDBJ databases">
        <title>Genome sequence of Campylobacter curvus 525.92 isolated from human feces.</title>
        <authorList>
            <person name="Fouts D.E."/>
            <person name="Mongodin E.F."/>
            <person name="Puiu D."/>
            <person name="Sebastian Y."/>
            <person name="Miller W.G."/>
            <person name="Mandrell R.E."/>
            <person name="Lastovica A.J."/>
            <person name="Nelson K.E."/>
        </authorList>
    </citation>
    <scope>NUCLEOTIDE SEQUENCE [LARGE SCALE GENOMIC DNA]</scope>
    <source>
        <strain>525.92</strain>
    </source>
</reference>
<proteinExistence type="inferred from homology"/>
<sequence>MGRAFEYRRAAKEARWDKMSKVFPKLAKAITVAAKEGGVEPDMNPKLRAAIAAAKAENMPKDNIDAAIKRANGKDSADIKTIFYDGKAAHGVQIIVECATDNPTRTVANVKAIFSKNGGEVLPSGSLSFMFSRKSVFELNKPTTDIEEVELELIDFGLSDIELEDDTLYVYGDYTSFGTLHEGIEKLGLEVKKGTLQYIPNSTITLSEEQMQEVERLLDKLEDDDDVQAVYTNIE</sequence>
<protein>
    <recommendedName>
        <fullName evidence="1">Probable transcriptional regulatory protein Ccur92_05350</fullName>
    </recommendedName>
</protein>